<accession>Q4PBE6</accession>
<accession>A0A0D1DYT7</accession>
<protein>
    <recommendedName>
        <fullName>Histone acetyltransferase type B catalytic subunit</fullName>
        <ecNumber evidence="3">2.3.1.48</ecNumber>
    </recommendedName>
</protein>
<gene>
    <name type="primary">HAT1</name>
    <name type="ORF">UMAG_02567</name>
</gene>
<feature type="chain" id="PRO_0000227727" description="Histone acetyltransferase type B catalytic subunit">
    <location>
        <begin position="1"/>
        <end position="448"/>
    </location>
</feature>
<feature type="region of interest" description="Interaction with histone H4 N-terminus" evidence="3">
    <location>
        <begin position="39"/>
        <end position="41"/>
    </location>
</feature>
<feature type="region of interest" description="Interaction with histone H4 N-terminus" evidence="3">
    <location>
        <begin position="224"/>
        <end position="226"/>
    </location>
</feature>
<feature type="region of interest" description="Disordered" evidence="4">
    <location>
        <begin position="407"/>
        <end position="448"/>
    </location>
</feature>
<feature type="active site" description="Proton donor/acceptor" evidence="3">
    <location>
        <position position="275"/>
    </location>
</feature>
<feature type="binding site" evidence="3">
    <location>
        <begin position="240"/>
        <end position="242"/>
    </location>
    <ligand>
        <name>acetyl-CoA</name>
        <dbReference type="ChEBI" id="CHEBI:57288"/>
    </ligand>
</feature>
<feature type="binding site" evidence="3">
    <location>
        <begin position="247"/>
        <end position="253"/>
    </location>
    <ligand>
        <name>acetyl-CoA</name>
        <dbReference type="ChEBI" id="CHEBI:57288"/>
    </ligand>
</feature>
<feature type="site" description="Interaction with histone H4 N-terminus" evidence="2">
    <location>
        <position position="198"/>
    </location>
</feature>
<dbReference type="EC" id="2.3.1.48" evidence="3"/>
<dbReference type="EMBL" id="CM003145">
    <property type="protein sequence ID" value="KIS69219.1"/>
    <property type="molecule type" value="Genomic_DNA"/>
</dbReference>
<dbReference type="RefSeq" id="XP_011388972.1">
    <property type="nucleotide sequence ID" value="XM_011390670.1"/>
</dbReference>
<dbReference type="SMR" id="Q4PBE6"/>
<dbReference type="FunCoup" id="Q4PBE6">
    <property type="interactions" value="660"/>
</dbReference>
<dbReference type="STRING" id="237631.Q4PBE6"/>
<dbReference type="EnsemblFungi" id="KIS69219">
    <property type="protein sequence ID" value="KIS69219"/>
    <property type="gene ID" value="UMAG_02567"/>
</dbReference>
<dbReference type="GeneID" id="23563283"/>
<dbReference type="KEGG" id="uma:UMAG_02567"/>
<dbReference type="VEuPathDB" id="FungiDB:UMAG_02567"/>
<dbReference type="eggNOG" id="KOG2696">
    <property type="taxonomic scope" value="Eukaryota"/>
</dbReference>
<dbReference type="HOGENOM" id="CLU_036024_2_1_1"/>
<dbReference type="InParanoid" id="Q4PBE6"/>
<dbReference type="OMA" id="WTCDAND"/>
<dbReference type="OrthoDB" id="10253098at2759"/>
<dbReference type="Proteomes" id="UP000000561">
    <property type="component" value="Chromosome 6"/>
</dbReference>
<dbReference type="GO" id="GO:0000781">
    <property type="term" value="C:chromosome, telomeric region"/>
    <property type="evidence" value="ECO:0007669"/>
    <property type="project" value="GOC"/>
</dbReference>
<dbReference type="GO" id="GO:0005737">
    <property type="term" value="C:cytoplasm"/>
    <property type="evidence" value="ECO:0007669"/>
    <property type="project" value="UniProtKB-SubCell"/>
</dbReference>
<dbReference type="GO" id="GO:0005634">
    <property type="term" value="C:nucleus"/>
    <property type="evidence" value="ECO:0007669"/>
    <property type="project" value="UniProtKB-SubCell"/>
</dbReference>
<dbReference type="GO" id="GO:0042393">
    <property type="term" value="F:histone binding"/>
    <property type="evidence" value="ECO:0007669"/>
    <property type="project" value="InterPro"/>
</dbReference>
<dbReference type="GO" id="GO:0010485">
    <property type="term" value="F:histone H4 acetyltransferase activity"/>
    <property type="evidence" value="ECO:0000318"/>
    <property type="project" value="GO_Central"/>
</dbReference>
<dbReference type="GO" id="GO:0006281">
    <property type="term" value="P:DNA repair"/>
    <property type="evidence" value="ECO:0007669"/>
    <property type="project" value="UniProtKB-KW"/>
</dbReference>
<dbReference type="GO" id="GO:0031509">
    <property type="term" value="P:subtelomeric heterochromatin formation"/>
    <property type="evidence" value="ECO:0007669"/>
    <property type="project" value="InterPro"/>
</dbReference>
<dbReference type="Gene3D" id="1.10.10.390">
    <property type="match status" value="1"/>
</dbReference>
<dbReference type="Gene3D" id="3.40.630.30">
    <property type="match status" value="1"/>
</dbReference>
<dbReference type="Gene3D" id="3.90.360.10">
    <property type="entry name" value="Histone acetyl transferase 1 (HAT1), N-terminal domain"/>
    <property type="match status" value="1"/>
</dbReference>
<dbReference type="InterPro" id="IPR016181">
    <property type="entry name" value="Acyl_CoA_acyltransferase"/>
</dbReference>
<dbReference type="InterPro" id="IPR000182">
    <property type="entry name" value="GNAT_dom"/>
</dbReference>
<dbReference type="InterPro" id="IPR019467">
    <property type="entry name" value="Hat1_N"/>
</dbReference>
<dbReference type="InterPro" id="IPR037113">
    <property type="entry name" value="Hat1_N_sf"/>
</dbReference>
<dbReference type="InterPro" id="IPR017380">
    <property type="entry name" value="Hist_AcTrfase_B-typ_cat-su"/>
</dbReference>
<dbReference type="InterPro" id="IPR013523">
    <property type="entry name" value="Hist_AcTrfase_HAT1_C"/>
</dbReference>
<dbReference type="PANTHER" id="PTHR12046">
    <property type="entry name" value="HISTONE ACETYLTRANSFERASE TYPE B CATALYTIC SUBUNIT"/>
    <property type="match status" value="1"/>
</dbReference>
<dbReference type="Pfam" id="PF00583">
    <property type="entry name" value="Acetyltransf_1"/>
    <property type="match status" value="1"/>
</dbReference>
<dbReference type="Pfam" id="PF21184">
    <property type="entry name" value="HAT1_C_fung"/>
    <property type="match status" value="1"/>
</dbReference>
<dbReference type="Pfam" id="PF10394">
    <property type="entry name" value="Hat1_N"/>
    <property type="match status" value="1"/>
</dbReference>
<dbReference type="PIRSF" id="PIRSF038084">
    <property type="entry name" value="HAT-B_cat"/>
    <property type="match status" value="1"/>
</dbReference>
<dbReference type="SUPFAM" id="SSF55729">
    <property type="entry name" value="Acyl-CoA N-acyltransferases (Nat)"/>
    <property type="match status" value="1"/>
</dbReference>
<comment type="function">
    <text evidence="3">Catalytic component of the histone acetylase B (HAT-B) complex. Acetylates 'Lys-12' of histone H4 which is required for telomeric silencing. Has intrinsic substrate specificity that modifies lysine in recognition sequence GXGKXG. Involved in DNA double-strand break repair.</text>
</comment>
<comment type="catalytic activity">
    <reaction evidence="3">
        <text>L-lysyl-[protein] + acetyl-CoA = N(6)-acetyl-L-lysyl-[protein] + CoA + H(+)</text>
        <dbReference type="Rhea" id="RHEA:45948"/>
        <dbReference type="Rhea" id="RHEA-COMP:9752"/>
        <dbReference type="Rhea" id="RHEA-COMP:10731"/>
        <dbReference type="ChEBI" id="CHEBI:15378"/>
        <dbReference type="ChEBI" id="CHEBI:29969"/>
        <dbReference type="ChEBI" id="CHEBI:57287"/>
        <dbReference type="ChEBI" id="CHEBI:57288"/>
        <dbReference type="ChEBI" id="CHEBI:61930"/>
        <dbReference type="EC" id="2.3.1.48"/>
    </reaction>
</comment>
<comment type="subunit">
    <text evidence="3">Component of the HAT-B complex composed of at least HAT1 and HAT2. The HAT-B complex binds to histone H4 tail.</text>
</comment>
<comment type="subcellular location">
    <subcellularLocation>
        <location evidence="1">Cytoplasm</location>
    </subcellularLocation>
    <subcellularLocation>
        <location evidence="1">Nucleus</location>
    </subcellularLocation>
</comment>
<comment type="similarity">
    <text evidence="5">Belongs to the HAT1 family.</text>
</comment>
<sequence>MKDSWSSNSTTSTAIRLVGSPYGTDSPFQPTFTYPIYGEAETIYGYEGLAIKLSVASGSLVPLLEVTYRAKNEATTAEIDDVEGKIKEFLAPDFLSTSSPSAMEEFETVVKADKEFRPLGDKVHSYTRGKVDKGKAKSSTASLASSTLSASDPNARVFEIYRSTWHTPGFREYHRRMQLFTLLFIEGASYIQEDETNWEFFTLYEKVSRDDKQTWHFMGYTSLYKFWCWPDSSRIRLSQFVILPPFQKQGHGGALYTTVYDQIRERANVTELTVEDPSEDFDRLRDGNDLRRLLAPGGFADSAKAQNKLHAPLDKEWIESQRLQHKLAPRQWSRVLEMVQLMNLDTTDHEQVKQYRLQVKARIYRQNKDILMQLEKQQQRSKLQETFEGVVEEYGDMVGVDVEDLLDDGPSGTGALYGADEEEDQEQGQGDRHYSNGNGPPRKMARLA</sequence>
<reference key="1">
    <citation type="journal article" date="2006" name="Nature">
        <title>Insights from the genome of the biotrophic fungal plant pathogen Ustilago maydis.</title>
        <authorList>
            <person name="Kaemper J."/>
            <person name="Kahmann R."/>
            <person name="Boelker M."/>
            <person name="Ma L.-J."/>
            <person name="Brefort T."/>
            <person name="Saville B.J."/>
            <person name="Banuett F."/>
            <person name="Kronstad J.W."/>
            <person name="Gold S.E."/>
            <person name="Mueller O."/>
            <person name="Perlin M.H."/>
            <person name="Woesten H.A.B."/>
            <person name="de Vries R."/>
            <person name="Ruiz-Herrera J."/>
            <person name="Reynaga-Pena C.G."/>
            <person name="Snetselaar K."/>
            <person name="McCann M."/>
            <person name="Perez-Martin J."/>
            <person name="Feldbruegge M."/>
            <person name="Basse C.W."/>
            <person name="Steinberg G."/>
            <person name="Ibeas J.I."/>
            <person name="Holloman W."/>
            <person name="Guzman P."/>
            <person name="Farman M.L."/>
            <person name="Stajich J.E."/>
            <person name="Sentandreu R."/>
            <person name="Gonzalez-Prieto J.M."/>
            <person name="Kennell J.C."/>
            <person name="Molina L."/>
            <person name="Schirawski J."/>
            <person name="Mendoza-Mendoza A."/>
            <person name="Greilinger D."/>
            <person name="Muench K."/>
            <person name="Roessel N."/>
            <person name="Scherer M."/>
            <person name="Vranes M."/>
            <person name="Ladendorf O."/>
            <person name="Vincon V."/>
            <person name="Fuchs U."/>
            <person name="Sandrock B."/>
            <person name="Meng S."/>
            <person name="Ho E.C.H."/>
            <person name="Cahill M.J."/>
            <person name="Boyce K.J."/>
            <person name="Klose J."/>
            <person name="Klosterman S.J."/>
            <person name="Deelstra H.J."/>
            <person name="Ortiz-Castellanos L."/>
            <person name="Li W."/>
            <person name="Sanchez-Alonso P."/>
            <person name="Schreier P.H."/>
            <person name="Haeuser-Hahn I."/>
            <person name="Vaupel M."/>
            <person name="Koopmann E."/>
            <person name="Friedrich G."/>
            <person name="Voss H."/>
            <person name="Schlueter T."/>
            <person name="Margolis J."/>
            <person name="Platt D."/>
            <person name="Swimmer C."/>
            <person name="Gnirke A."/>
            <person name="Chen F."/>
            <person name="Vysotskaia V."/>
            <person name="Mannhaupt G."/>
            <person name="Gueldener U."/>
            <person name="Muensterkoetter M."/>
            <person name="Haase D."/>
            <person name="Oesterheld M."/>
            <person name="Mewes H.-W."/>
            <person name="Mauceli E.W."/>
            <person name="DeCaprio D."/>
            <person name="Wade C.M."/>
            <person name="Butler J."/>
            <person name="Young S.K."/>
            <person name="Jaffe D.B."/>
            <person name="Calvo S.E."/>
            <person name="Nusbaum C."/>
            <person name="Galagan J.E."/>
            <person name="Birren B.W."/>
        </authorList>
    </citation>
    <scope>NUCLEOTIDE SEQUENCE [LARGE SCALE GENOMIC DNA]</scope>
    <source>
        <strain>DSM 14603 / FGSC 9021 / UM521</strain>
    </source>
</reference>
<reference key="2">
    <citation type="submission" date="2014-09" db="EMBL/GenBank/DDBJ databases">
        <authorList>
            <person name="Gueldener U."/>
            <person name="Muensterkoetter M."/>
            <person name="Walter M.C."/>
            <person name="Mannhaupt G."/>
            <person name="Kahmann R."/>
        </authorList>
    </citation>
    <scope>GENOME REANNOTATION</scope>
    <source>
        <strain>DSM 14603 / FGSC 9021 / UM521</strain>
    </source>
</reference>
<name>HAT1_MYCMD</name>
<proteinExistence type="inferred from homology"/>
<keyword id="KW-0012">Acyltransferase</keyword>
<keyword id="KW-0156">Chromatin regulator</keyword>
<keyword id="KW-0963">Cytoplasm</keyword>
<keyword id="KW-0227">DNA damage</keyword>
<keyword id="KW-0234">DNA repair</keyword>
<keyword id="KW-0539">Nucleus</keyword>
<keyword id="KW-1185">Reference proteome</keyword>
<keyword id="KW-0808">Transferase</keyword>
<organism>
    <name type="scientific">Mycosarcoma maydis</name>
    <name type="common">Corn smut fungus</name>
    <name type="synonym">Ustilago maydis</name>
    <dbReference type="NCBI Taxonomy" id="5270"/>
    <lineage>
        <taxon>Eukaryota</taxon>
        <taxon>Fungi</taxon>
        <taxon>Dikarya</taxon>
        <taxon>Basidiomycota</taxon>
        <taxon>Ustilaginomycotina</taxon>
        <taxon>Ustilaginomycetes</taxon>
        <taxon>Ustilaginales</taxon>
        <taxon>Ustilaginaceae</taxon>
        <taxon>Mycosarcoma</taxon>
    </lineage>
</organism>
<evidence type="ECO:0000250" key="1"/>
<evidence type="ECO:0000250" key="2">
    <source>
        <dbReference type="UniProtKB" id="O14929"/>
    </source>
</evidence>
<evidence type="ECO:0000250" key="3">
    <source>
        <dbReference type="UniProtKB" id="Q12341"/>
    </source>
</evidence>
<evidence type="ECO:0000256" key="4">
    <source>
        <dbReference type="SAM" id="MobiDB-lite"/>
    </source>
</evidence>
<evidence type="ECO:0000305" key="5"/>